<comment type="function">
    <text evidence="1">Specifically methylates guanosine-37 in various tRNAs.</text>
</comment>
<comment type="catalytic activity">
    <reaction evidence="1">
        <text>guanosine(37) in tRNA + S-adenosyl-L-methionine = N(1)-methylguanosine(37) in tRNA + S-adenosyl-L-homocysteine + H(+)</text>
        <dbReference type="Rhea" id="RHEA:36899"/>
        <dbReference type="Rhea" id="RHEA-COMP:10145"/>
        <dbReference type="Rhea" id="RHEA-COMP:10147"/>
        <dbReference type="ChEBI" id="CHEBI:15378"/>
        <dbReference type="ChEBI" id="CHEBI:57856"/>
        <dbReference type="ChEBI" id="CHEBI:59789"/>
        <dbReference type="ChEBI" id="CHEBI:73542"/>
        <dbReference type="ChEBI" id="CHEBI:74269"/>
        <dbReference type="EC" id="2.1.1.228"/>
    </reaction>
</comment>
<comment type="subunit">
    <text evidence="1">Homodimer.</text>
</comment>
<comment type="subcellular location">
    <subcellularLocation>
        <location evidence="1">Cytoplasm</location>
    </subcellularLocation>
</comment>
<comment type="similarity">
    <text evidence="1">Belongs to the RNA methyltransferase TrmD family.</text>
</comment>
<reference key="1">
    <citation type="journal article" date="2006" name="J. Bacteriol.">
        <title>Complete genome sequence of Yersinia pestis strains Antiqua and Nepal516: evidence of gene reduction in an emerging pathogen.</title>
        <authorList>
            <person name="Chain P.S.G."/>
            <person name="Hu P."/>
            <person name="Malfatti S.A."/>
            <person name="Radnedge L."/>
            <person name="Larimer F."/>
            <person name="Vergez L.M."/>
            <person name="Worsham P."/>
            <person name="Chu M.C."/>
            <person name="Andersen G.L."/>
        </authorList>
    </citation>
    <scope>NUCLEOTIDE SEQUENCE [LARGE SCALE GENOMIC DNA]</scope>
    <source>
        <strain>Antiqua</strain>
    </source>
</reference>
<organism>
    <name type="scientific">Yersinia pestis bv. Antiqua (strain Antiqua)</name>
    <dbReference type="NCBI Taxonomy" id="360102"/>
    <lineage>
        <taxon>Bacteria</taxon>
        <taxon>Pseudomonadati</taxon>
        <taxon>Pseudomonadota</taxon>
        <taxon>Gammaproteobacteria</taxon>
        <taxon>Enterobacterales</taxon>
        <taxon>Yersiniaceae</taxon>
        <taxon>Yersinia</taxon>
    </lineage>
</organism>
<sequence>MWIGVISLFPEMFRAITDYGVTGRAVKNGLLSVQCWSPRDFTYDRHRTVDDRPYGGGPGMLMMVQPLREAIHAAKAAAGEGAKVIYLSPQGRKLDQQGVCELAMNQKMILVCGRYEGVDERVIKTEIDEEWSIGDYVLSGGELPAMTLIDSVSRFIPGVLGHHASAEEDSFVDGLLDCPHYTRPEVLEGMEVPPVLLSGNHAEIRRWRLKQSLGRTWLRRPELLESLALTDEQMVLLAEFQREHKP</sequence>
<dbReference type="EC" id="2.1.1.228" evidence="1"/>
<dbReference type="EMBL" id="CP000308">
    <property type="protein sequence ID" value="ABG14813.1"/>
    <property type="molecule type" value="Genomic_DNA"/>
</dbReference>
<dbReference type="RefSeq" id="WP_002222284.1">
    <property type="nucleotide sequence ID" value="NZ_CP009906.1"/>
</dbReference>
<dbReference type="SMR" id="Q1C409"/>
<dbReference type="GeneID" id="57975424"/>
<dbReference type="KEGG" id="ypa:YPA_2851"/>
<dbReference type="Proteomes" id="UP000001971">
    <property type="component" value="Chromosome"/>
</dbReference>
<dbReference type="GO" id="GO:0005829">
    <property type="term" value="C:cytosol"/>
    <property type="evidence" value="ECO:0007669"/>
    <property type="project" value="TreeGrafter"/>
</dbReference>
<dbReference type="GO" id="GO:0052906">
    <property type="term" value="F:tRNA (guanine(37)-N1)-methyltransferase activity"/>
    <property type="evidence" value="ECO:0007669"/>
    <property type="project" value="UniProtKB-UniRule"/>
</dbReference>
<dbReference type="GO" id="GO:0002939">
    <property type="term" value="P:tRNA N1-guanine methylation"/>
    <property type="evidence" value="ECO:0007669"/>
    <property type="project" value="TreeGrafter"/>
</dbReference>
<dbReference type="CDD" id="cd18080">
    <property type="entry name" value="TrmD-like"/>
    <property type="match status" value="1"/>
</dbReference>
<dbReference type="FunFam" id="1.10.1270.20:FF:000001">
    <property type="entry name" value="tRNA (guanine-N(1)-)-methyltransferase"/>
    <property type="match status" value="1"/>
</dbReference>
<dbReference type="FunFam" id="3.40.1280.10:FF:000001">
    <property type="entry name" value="tRNA (guanine-N(1)-)-methyltransferase"/>
    <property type="match status" value="1"/>
</dbReference>
<dbReference type="Gene3D" id="3.40.1280.10">
    <property type="match status" value="1"/>
</dbReference>
<dbReference type="Gene3D" id="1.10.1270.20">
    <property type="entry name" value="tRNA(m1g37)methyltransferase, domain 2"/>
    <property type="match status" value="1"/>
</dbReference>
<dbReference type="HAMAP" id="MF_00605">
    <property type="entry name" value="TrmD"/>
    <property type="match status" value="1"/>
</dbReference>
<dbReference type="InterPro" id="IPR029028">
    <property type="entry name" value="Alpha/beta_knot_MTases"/>
</dbReference>
<dbReference type="InterPro" id="IPR023148">
    <property type="entry name" value="tRNA_m1G_MeTrfase_C_sf"/>
</dbReference>
<dbReference type="InterPro" id="IPR002649">
    <property type="entry name" value="tRNA_m1G_MeTrfase_TrmD"/>
</dbReference>
<dbReference type="InterPro" id="IPR029026">
    <property type="entry name" value="tRNA_m1G_MTases_N"/>
</dbReference>
<dbReference type="InterPro" id="IPR016009">
    <property type="entry name" value="tRNA_MeTrfase_TRMD/TRM10"/>
</dbReference>
<dbReference type="NCBIfam" id="NF000648">
    <property type="entry name" value="PRK00026.1"/>
    <property type="match status" value="1"/>
</dbReference>
<dbReference type="NCBIfam" id="TIGR00088">
    <property type="entry name" value="trmD"/>
    <property type="match status" value="1"/>
</dbReference>
<dbReference type="PANTHER" id="PTHR46417">
    <property type="entry name" value="TRNA (GUANINE-N(1)-)-METHYLTRANSFERASE"/>
    <property type="match status" value="1"/>
</dbReference>
<dbReference type="PANTHER" id="PTHR46417:SF1">
    <property type="entry name" value="TRNA (GUANINE-N(1)-)-METHYLTRANSFERASE"/>
    <property type="match status" value="1"/>
</dbReference>
<dbReference type="Pfam" id="PF01746">
    <property type="entry name" value="tRNA_m1G_MT"/>
    <property type="match status" value="1"/>
</dbReference>
<dbReference type="PIRSF" id="PIRSF000386">
    <property type="entry name" value="tRNA_mtase"/>
    <property type="match status" value="1"/>
</dbReference>
<dbReference type="SUPFAM" id="SSF75217">
    <property type="entry name" value="alpha/beta knot"/>
    <property type="match status" value="1"/>
</dbReference>
<keyword id="KW-0963">Cytoplasm</keyword>
<keyword id="KW-0489">Methyltransferase</keyword>
<keyword id="KW-0949">S-adenosyl-L-methionine</keyword>
<keyword id="KW-0808">Transferase</keyword>
<keyword id="KW-0819">tRNA processing</keyword>
<evidence type="ECO:0000255" key="1">
    <source>
        <dbReference type="HAMAP-Rule" id="MF_00605"/>
    </source>
</evidence>
<protein>
    <recommendedName>
        <fullName evidence="1">tRNA (guanine-N(1)-)-methyltransferase</fullName>
        <ecNumber evidence="1">2.1.1.228</ecNumber>
    </recommendedName>
    <alternativeName>
        <fullName evidence="1">M1G-methyltransferase</fullName>
    </alternativeName>
    <alternativeName>
        <fullName evidence="1">tRNA [GM37] methyltransferase</fullName>
    </alternativeName>
</protein>
<proteinExistence type="inferred from homology"/>
<accession>Q1C409</accession>
<gene>
    <name evidence="1" type="primary">trmD</name>
    <name type="ordered locus">YPA_2851</name>
</gene>
<feature type="chain" id="PRO_0000257492" description="tRNA (guanine-N(1)-)-methyltransferase">
    <location>
        <begin position="1"/>
        <end position="246"/>
    </location>
</feature>
<feature type="binding site" evidence="1">
    <location>
        <position position="113"/>
    </location>
    <ligand>
        <name>S-adenosyl-L-methionine</name>
        <dbReference type="ChEBI" id="CHEBI:59789"/>
    </ligand>
</feature>
<feature type="binding site" evidence="1">
    <location>
        <begin position="133"/>
        <end position="138"/>
    </location>
    <ligand>
        <name>S-adenosyl-L-methionine</name>
        <dbReference type="ChEBI" id="CHEBI:59789"/>
    </ligand>
</feature>
<name>TRMD_YERPA</name>